<feature type="signal peptide" evidence="2">
    <location>
        <begin position="1"/>
        <end position="19"/>
    </location>
</feature>
<feature type="chain" id="PRO_0000240368" description="ERAD-associated E3 ubiquitin-protein ligase component HRD3">
    <location>
        <begin position="20"/>
        <end position="833"/>
    </location>
</feature>
<feature type="transmembrane region" description="Helical" evidence="2">
    <location>
        <begin position="752"/>
        <end position="772"/>
    </location>
</feature>
<feature type="repeat" description="Sel1-like 1">
    <location>
        <begin position="107"/>
        <end position="143"/>
    </location>
</feature>
<feature type="repeat" description="Sel1-like 2">
    <location>
        <begin position="147"/>
        <end position="184"/>
    </location>
</feature>
<feature type="repeat" description="Sel1-like 3">
    <location>
        <begin position="185"/>
        <end position="220"/>
    </location>
</feature>
<feature type="repeat" description="Sel1-like 4">
    <location>
        <begin position="592"/>
        <end position="623"/>
    </location>
</feature>
<feature type="repeat" description="Sel1-like 5">
    <location>
        <begin position="624"/>
        <end position="659"/>
    </location>
</feature>
<feature type="region of interest" description="Disordered" evidence="3">
    <location>
        <begin position="789"/>
        <end position="818"/>
    </location>
</feature>
<feature type="compositionally biased region" description="Acidic residues" evidence="3">
    <location>
        <begin position="796"/>
        <end position="810"/>
    </location>
</feature>
<feature type="glycosylation site" description="N-linked (GlcNAc...) asparagine" evidence="2">
    <location>
        <position position="105"/>
    </location>
</feature>
<feature type="glycosylation site" description="N-linked (GlcNAc...) asparagine" evidence="2">
    <location>
        <position position="127"/>
    </location>
</feature>
<feature type="glycosylation site" description="N-linked (GlcNAc...) asparagine" evidence="2">
    <location>
        <position position="146"/>
    </location>
</feature>
<feature type="glycosylation site" description="N-linked (GlcNAc...) asparagine" evidence="2">
    <location>
        <position position="424"/>
    </location>
</feature>
<feature type="glycosylation site" description="N-linked (GlcNAc...) asparagine" evidence="2">
    <location>
        <position position="607"/>
    </location>
</feature>
<feature type="glycosylation site" description="N-linked (GlcNAc...) asparagine" evidence="2">
    <location>
        <position position="688"/>
    </location>
</feature>
<feature type="glycosylation site" description="N-linked (GlcNAc...) asparagine" evidence="2">
    <location>
        <position position="713"/>
    </location>
</feature>
<sequence>MLLSTYLNWASVLLTIAGAESNIDPWDEVSSFLQGKLRKLDVTNPNAYDMNDNEQDATFYVSMDYHEEEERSEYESVWQYYNENSDQDWHKSVYDKLQVSADQFNNTEAMYKLSQINLWGQYGYPHNKSVAFQYLQKFNDMTSYENSSALFDLAVAYSTGLFGTLPVDVARGLLYFQRSARLGDLKAKQVLAYRYFSGYSVARDVDKALLLYKEIAEEIKKKYSEEQWNMVFPYIESYIVRIPDFDEGLLGKGLSTVPQSVRRKKTTRPPFAGSSNLKPIGDVGYGEVVMQFKFNAGNGNPGSFVISDSEHEDRLVELFYTAWDLYKGTYTRGRDCDKAKRLLLQVYKTYDAEVKYMDNLQKFFYVKSLDLLAHMYFTGEGFERPNVQAALDLFDRSEKILEGAEISRTASEVDKGLISQYYFNNTLGALKHYKKAKESGNAHGILFYQLGKLSEKNPELKIGDPYLYMQEASSQQYLPAQYEFAKMVESNELRKYSVEDITRLYKAFVEENENIMAPHLRLGFSELLGGSSEVSLYAYAQAAEQGYEAAQISAAYLLYQLPYKFDDPPETTIERKTMAISYYTRAFKQGNTDAAVVAGDIYFQMKNYTKALSLYQSAALKFSAQALWNIGYMYEHGLGVEKDFHLAKRFYDQILEHNQKLYFAVKASVMKLQLKSWFMWLNGKELDNISIDQEQESTVVRPFFDRLVQLLKNLSRETRGDNKKKNQHRILKEKKTPSQGIMERFGLQTEDLLTMVCVLIIFAISMFFRTVAPRGQWNVRINGVNIAGGNALGEEGNPENENEEDDENDDEGRARARNNFGFGNNFDVQVFAI</sequence>
<gene>
    <name type="primary">HRD3</name>
    <name type="ordered locus">CAGL0J08756g</name>
</gene>
<keyword id="KW-0256">Endoplasmic reticulum</keyword>
<keyword id="KW-0325">Glycoprotein</keyword>
<keyword id="KW-0472">Membrane</keyword>
<keyword id="KW-1185">Reference proteome</keyword>
<keyword id="KW-0677">Repeat</keyword>
<keyword id="KW-0732">Signal</keyword>
<keyword id="KW-0812">Transmembrane</keyword>
<keyword id="KW-1133">Transmembrane helix</keyword>
<reference key="1">
    <citation type="journal article" date="2004" name="Nature">
        <title>Genome evolution in yeasts.</title>
        <authorList>
            <person name="Dujon B."/>
            <person name="Sherman D."/>
            <person name="Fischer G."/>
            <person name="Durrens P."/>
            <person name="Casaregola S."/>
            <person name="Lafontaine I."/>
            <person name="de Montigny J."/>
            <person name="Marck C."/>
            <person name="Neuveglise C."/>
            <person name="Talla E."/>
            <person name="Goffard N."/>
            <person name="Frangeul L."/>
            <person name="Aigle M."/>
            <person name="Anthouard V."/>
            <person name="Babour A."/>
            <person name="Barbe V."/>
            <person name="Barnay S."/>
            <person name="Blanchin S."/>
            <person name="Beckerich J.-M."/>
            <person name="Beyne E."/>
            <person name="Bleykasten C."/>
            <person name="Boisrame A."/>
            <person name="Boyer J."/>
            <person name="Cattolico L."/>
            <person name="Confanioleri F."/>
            <person name="de Daruvar A."/>
            <person name="Despons L."/>
            <person name="Fabre E."/>
            <person name="Fairhead C."/>
            <person name="Ferry-Dumazet H."/>
            <person name="Groppi A."/>
            <person name="Hantraye F."/>
            <person name="Hennequin C."/>
            <person name="Jauniaux N."/>
            <person name="Joyet P."/>
            <person name="Kachouri R."/>
            <person name="Kerrest A."/>
            <person name="Koszul R."/>
            <person name="Lemaire M."/>
            <person name="Lesur I."/>
            <person name="Ma L."/>
            <person name="Muller H."/>
            <person name="Nicaud J.-M."/>
            <person name="Nikolski M."/>
            <person name="Oztas S."/>
            <person name="Ozier-Kalogeropoulos O."/>
            <person name="Pellenz S."/>
            <person name="Potier S."/>
            <person name="Richard G.-F."/>
            <person name="Straub M.-L."/>
            <person name="Suleau A."/>
            <person name="Swennen D."/>
            <person name="Tekaia F."/>
            <person name="Wesolowski-Louvel M."/>
            <person name="Westhof E."/>
            <person name="Wirth B."/>
            <person name="Zeniou-Meyer M."/>
            <person name="Zivanovic Y."/>
            <person name="Bolotin-Fukuhara M."/>
            <person name="Thierry A."/>
            <person name="Bouchier C."/>
            <person name="Caudron B."/>
            <person name="Scarpelli C."/>
            <person name="Gaillardin C."/>
            <person name="Weissenbach J."/>
            <person name="Wincker P."/>
            <person name="Souciet J.-L."/>
        </authorList>
    </citation>
    <scope>NUCLEOTIDE SEQUENCE [LARGE SCALE GENOMIC DNA]</scope>
    <source>
        <strain>ATCC 2001 / BCRC 20586 / JCM 3761 / NBRC 0622 / NRRL Y-65 / CBS 138</strain>
    </source>
</reference>
<proteinExistence type="inferred from homology"/>
<dbReference type="EMBL" id="CR380956">
    <property type="protein sequence ID" value="CAG61040.1"/>
    <property type="molecule type" value="Genomic_DNA"/>
</dbReference>
<dbReference type="RefSeq" id="XP_448089.1">
    <property type="nucleotide sequence ID" value="XM_448089.1"/>
</dbReference>
<dbReference type="SMR" id="Q6FNV5"/>
<dbReference type="FunCoup" id="Q6FNV5">
    <property type="interactions" value="344"/>
</dbReference>
<dbReference type="STRING" id="284593.Q6FNV5"/>
<dbReference type="GlyCosmos" id="Q6FNV5">
    <property type="glycosylation" value="7 sites, No reported glycans"/>
</dbReference>
<dbReference type="EnsemblFungi" id="CAGL0J08756g-T">
    <property type="protein sequence ID" value="CAGL0J08756g-T-p1"/>
    <property type="gene ID" value="CAGL0J08756g"/>
</dbReference>
<dbReference type="KEGG" id="cgr:2889675"/>
<dbReference type="CGD" id="CAL0133178">
    <property type="gene designation" value="CAGL0J08756g"/>
</dbReference>
<dbReference type="VEuPathDB" id="FungiDB:CAGL0J08756g"/>
<dbReference type="eggNOG" id="KOG1550">
    <property type="taxonomic scope" value="Eukaryota"/>
</dbReference>
<dbReference type="HOGENOM" id="CLU_348239_0_0_1"/>
<dbReference type="InParanoid" id="Q6FNV5"/>
<dbReference type="OMA" id="LLGHWMD"/>
<dbReference type="Proteomes" id="UP000002428">
    <property type="component" value="Chromosome J"/>
</dbReference>
<dbReference type="GO" id="GO:0000839">
    <property type="term" value="C:Hrd1p ubiquitin ligase ERAD-L complex"/>
    <property type="evidence" value="ECO:0007669"/>
    <property type="project" value="EnsemblFungi"/>
</dbReference>
<dbReference type="GO" id="GO:0000838">
    <property type="term" value="C:Hrd1p ubiquitin ligase ERAD-M complex"/>
    <property type="evidence" value="ECO:0007669"/>
    <property type="project" value="EnsemblFungi"/>
</dbReference>
<dbReference type="GO" id="GO:0034099">
    <property type="term" value="C:luminal surveillance complex"/>
    <property type="evidence" value="ECO:0007669"/>
    <property type="project" value="EnsemblFungi"/>
</dbReference>
<dbReference type="GO" id="GO:0004842">
    <property type="term" value="F:ubiquitin-protein transferase activity"/>
    <property type="evidence" value="ECO:0007669"/>
    <property type="project" value="EnsemblFungi"/>
</dbReference>
<dbReference type="GO" id="GO:1905524">
    <property type="term" value="P:negative regulation of protein autoubiquitination"/>
    <property type="evidence" value="ECO:0007669"/>
    <property type="project" value="EnsemblFungi"/>
</dbReference>
<dbReference type="GO" id="GO:0030970">
    <property type="term" value="P:retrograde protein transport, ER to cytosol"/>
    <property type="evidence" value="ECO:0007669"/>
    <property type="project" value="EnsemblFungi"/>
</dbReference>
<dbReference type="Gene3D" id="1.25.40.10">
    <property type="entry name" value="Tetratricopeptide repeat domain"/>
    <property type="match status" value="2"/>
</dbReference>
<dbReference type="InterPro" id="IPR006597">
    <property type="entry name" value="Sel1-like"/>
</dbReference>
<dbReference type="InterPro" id="IPR050767">
    <property type="entry name" value="Sel1_AlgK"/>
</dbReference>
<dbReference type="InterPro" id="IPR011990">
    <property type="entry name" value="TPR-like_helical_dom_sf"/>
</dbReference>
<dbReference type="PANTHER" id="PTHR11102:SF160">
    <property type="entry name" value="ERAD-ASSOCIATED E3 UBIQUITIN-PROTEIN LIGASE COMPONENT HRD3"/>
    <property type="match status" value="1"/>
</dbReference>
<dbReference type="PANTHER" id="PTHR11102">
    <property type="entry name" value="SEL-1-LIKE PROTEIN"/>
    <property type="match status" value="1"/>
</dbReference>
<dbReference type="Pfam" id="PF08238">
    <property type="entry name" value="Sel1"/>
    <property type="match status" value="7"/>
</dbReference>
<dbReference type="SMART" id="SM00671">
    <property type="entry name" value="SEL1"/>
    <property type="match status" value="5"/>
</dbReference>
<dbReference type="SUPFAM" id="SSF81901">
    <property type="entry name" value="HCP-like"/>
    <property type="match status" value="2"/>
</dbReference>
<comment type="function">
    <text evidence="1">Component of the endoplasmic reticulum quality control (ERQC) system involved in ubiquitin-dependent degradation of missfolded endoplasmic reticulum proteins. Component of the HRD1 ubiquitin ligase complex, which is part of the ERAD-L and ERAD-M pathways responsible for the rapid degradation of soluble lumenal and membrane proteins with misfolded lumenal domains (ERAD-L), or ER-membrane proteins with misfolded transmembrane domains (ERAD-M). ERAD-L substrates are ubiquitinated through HRD1 in conjunction with the E2 ubiquitin-conjugating enzymes UBC1 and UBC7-CUE1. Ubiquitinated substrates are then removed to the cytosol via the action of the UFD1-NPL4-CDC48/p97 (UNC) AAA ATPase complex and targeted to the proteasome. ERAD-M substrates are processed by the same HRD1-HRD3 core complex, but only a subset of the other components is required for ERAD-M. Stabilizes the HRD1 ubiquitin-protein ligase. Also has a function in recruiting misfolded protein substrates (By similarity).</text>
</comment>
<comment type="subunit">
    <text evidence="1">Interacts with HRD1.</text>
</comment>
<comment type="subcellular location">
    <subcellularLocation>
        <location evidence="1">Endoplasmic reticulum membrane</location>
        <topology evidence="1">Single-pass membrane protein</topology>
    </subcellularLocation>
</comment>
<comment type="similarity">
    <text evidence="4">Belongs to the sel-1 family.</text>
</comment>
<protein>
    <recommendedName>
        <fullName>ERAD-associated E3 ubiquitin-protein ligase component HRD3</fullName>
    </recommendedName>
</protein>
<name>HRD3_CANGA</name>
<evidence type="ECO:0000250" key="1"/>
<evidence type="ECO:0000255" key="2"/>
<evidence type="ECO:0000256" key="3">
    <source>
        <dbReference type="SAM" id="MobiDB-lite"/>
    </source>
</evidence>
<evidence type="ECO:0000305" key="4"/>
<accession>Q6FNV5</accession>
<organism>
    <name type="scientific">Candida glabrata (strain ATCC 2001 / BCRC 20586 / JCM 3761 / NBRC 0622 / NRRL Y-65 / CBS 138)</name>
    <name type="common">Yeast</name>
    <name type="synonym">Nakaseomyces glabratus</name>
    <dbReference type="NCBI Taxonomy" id="284593"/>
    <lineage>
        <taxon>Eukaryota</taxon>
        <taxon>Fungi</taxon>
        <taxon>Dikarya</taxon>
        <taxon>Ascomycota</taxon>
        <taxon>Saccharomycotina</taxon>
        <taxon>Saccharomycetes</taxon>
        <taxon>Saccharomycetales</taxon>
        <taxon>Saccharomycetaceae</taxon>
        <taxon>Nakaseomyces</taxon>
    </lineage>
</organism>